<protein>
    <recommendedName>
        <fullName evidence="1">UDP-N-acetylglucosamine 1-carboxyvinyltransferase</fullName>
        <ecNumber evidence="1">2.5.1.7</ecNumber>
    </recommendedName>
    <alternativeName>
        <fullName evidence="1">Enoylpyruvate transferase</fullName>
    </alternativeName>
    <alternativeName>
        <fullName evidence="1">UDP-N-acetylglucosamine enolpyruvyl transferase</fullName>
        <shortName evidence="1">EPT</shortName>
    </alternativeName>
</protein>
<accession>A8FR77</accession>
<sequence>MDKLKIEASEALAGNVVISGAKNAALPILMAGVLAETDFVVSNVPNLRDVKTSCELLRCLGAEVSRGDNSEVRISTTSLDHFCAPYDLVKTMRASILILGPLLARFGTADVSLPGGCAIGARPVNLHLHGLEQMGAKIEVEEGYIKARVDGRLKGAHIFMDMISVGATENLLMAATLADGETIIENAAREPEVIDLANCLIAMGAKIEGAGTDSIRIQGVESLKGCHYRVMPDRIETGSFLIAAAVTRGKIRCVDADPSTLEAVLAKLEDAGASITTGSDWIELDMQGKRPKAVNIKTVPYPGFPTDMQAQFCLLNVLAEGTSTITETIFENRFMHVPELIRMGANMELEGNTCIIQGIERLNGAQVMATDLRASASLVIAGLVADGTTIVDRIYHLDRGYEHIEDKFKGLGGHVERTQ</sequence>
<proteinExistence type="inferred from homology"/>
<comment type="function">
    <text evidence="1">Cell wall formation. Adds enolpyruvyl to UDP-N-acetylglucosamine.</text>
</comment>
<comment type="catalytic activity">
    <reaction evidence="1">
        <text>phosphoenolpyruvate + UDP-N-acetyl-alpha-D-glucosamine = UDP-N-acetyl-3-O-(1-carboxyvinyl)-alpha-D-glucosamine + phosphate</text>
        <dbReference type="Rhea" id="RHEA:18681"/>
        <dbReference type="ChEBI" id="CHEBI:43474"/>
        <dbReference type="ChEBI" id="CHEBI:57705"/>
        <dbReference type="ChEBI" id="CHEBI:58702"/>
        <dbReference type="ChEBI" id="CHEBI:68483"/>
        <dbReference type="EC" id="2.5.1.7"/>
    </reaction>
</comment>
<comment type="pathway">
    <text evidence="1">Cell wall biogenesis; peptidoglycan biosynthesis.</text>
</comment>
<comment type="subcellular location">
    <subcellularLocation>
        <location evidence="1">Cytoplasm</location>
    </subcellularLocation>
</comment>
<comment type="similarity">
    <text evidence="1">Belongs to the EPSP synthase family. MurA subfamily.</text>
</comment>
<evidence type="ECO:0000255" key="1">
    <source>
        <dbReference type="HAMAP-Rule" id="MF_00111"/>
    </source>
</evidence>
<feature type="chain" id="PRO_1000075985" description="UDP-N-acetylglucosamine 1-carboxyvinyltransferase">
    <location>
        <begin position="1"/>
        <end position="419"/>
    </location>
</feature>
<feature type="active site" description="Proton donor" evidence="1">
    <location>
        <position position="117"/>
    </location>
</feature>
<feature type="binding site" evidence="1">
    <location>
        <begin position="22"/>
        <end position="23"/>
    </location>
    <ligand>
        <name>phosphoenolpyruvate</name>
        <dbReference type="ChEBI" id="CHEBI:58702"/>
    </ligand>
</feature>
<feature type="binding site" evidence="1">
    <location>
        <position position="93"/>
    </location>
    <ligand>
        <name>UDP-N-acetyl-alpha-D-glucosamine</name>
        <dbReference type="ChEBI" id="CHEBI:57705"/>
    </ligand>
</feature>
<feature type="binding site" evidence="1">
    <location>
        <position position="307"/>
    </location>
    <ligand>
        <name>UDP-N-acetyl-alpha-D-glucosamine</name>
        <dbReference type="ChEBI" id="CHEBI:57705"/>
    </ligand>
</feature>
<feature type="binding site" evidence="1">
    <location>
        <position position="329"/>
    </location>
    <ligand>
        <name>UDP-N-acetyl-alpha-D-glucosamine</name>
        <dbReference type="ChEBI" id="CHEBI:57705"/>
    </ligand>
</feature>
<feature type="modified residue" description="2-(S-cysteinyl)pyruvic acid O-phosphothioketal" evidence="1">
    <location>
        <position position="117"/>
    </location>
</feature>
<reference key="1">
    <citation type="submission" date="2007-08" db="EMBL/GenBank/DDBJ databases">
        <title>Complete sequence of Shewanella sediminis HAW-EB3.</title>
        <authorList>
            <consortium name="US DOE Joint Genome Institute"/>
            <person name="Copeland A."/>
            <person name="Lucas S."/>
            <person name="Lapidus A."/>
            <person name="Barry K."/>
            <person name="Glavina del Rio T."/>
            <person name="Dalin E."/>
            <person name="Tice H."/>
            <person name="Pitluck S."/>
            <person name="Chertkov O."/>
            <person name="Brettin T."/>
            <person name="Bruce D."/>
            <person name="Detter J.C."/>
            <person name="Han C."/>
            <person name="Schmutz J."/>
            <person name="Larimer F."/>
            <person name="Land M."/>
            <person name="Hauser L."/>
            <person name="Kyrpides N."/>
            <person name="Kim E."/>
            <person name="Zhao J.-S."/>
            <person name="Richardson P."/>
        </authorList>
    </citation>
    <scope>NUCLEOTIDE SEQUENCE [LARGE SCALE GENOMIC DNA]</scope>
    <source>
        <strain>HAW-EB3</strain>
    </source>
</reference>
<keyword id="KW-0131">Cell cycle</keyword>
<keyword id="KW-0132">Cell division</keyword>
<keyword id="KW-0133">Cell shape</keyword>
<keyword id="KW-0961">Cell wall biogenesis/degradation</keyword>
<keyword id="KW-0963">Cytoplasm</keyword>
<keyword id="KW-0573">Peptidoglycan synthesis</keyword>
<keyword id="KW-0670">Pyruvate</keyword>
<keyword id="KW-1185">Reference proteome</keyword>
<keyword id="KW-0808">Transferase</keyword>
<name>MURA_SHESH</name>
<organism>
    <name type="scientific">Shewanella sediminis (strain HAW-EB3)</name>
    <dbReference type="NCBI Taxonomy" id="425104"/>
    <lineage>
        <taxon>Bacteria</taxon>
        <taxon>Pseudomonadati</taxon>
        <taxon>Pseudomonadota</taxon>
        <taxon>Gammaproteobacteria</taxon>
        <taxon>Alteromonadales</taxon>
        <taxon>Shewanellaceae</taxon>
        <taxon>Shewanella</taxon>
    </lineage>
</organism>
<dbReference type="EC" id="2.5.1.7" evidence="1"/>
<dbReference type="EMBL" id="CP000821">
    <property type="protein sequence ID" value="ABV35350.1"/>
    <property type="molecule type" value="Genomic_DNA"/>
</dbReference>
<dbReference type="RefSeq" id="WP_012141087.1">
    <property type="nucleotide sequence ID" value="NC_009831.1"/>
</dbReference>
<dbReference type="SMR" id="A8FR77"/>
<dbReference type="STRING" id="425104.Ssed_0739"/>
<dbReference type="KEGG" id="sse:Ssed_0739"/>
<dbReference type="eggNOG" id="COG0766">
    <property type="taxonomic scope" value="Bacteria"/>
</dbReference>
<dbReference type="HOGENOM" id="CLU_027387_0_0_6"/>
<dbReference type="OrthoDB" id="9803760at2"/>
<dbReference type="UniPathway" id="UPA00219"/>
<dbReference type="Proteomes" id="UP000002015">
    <property type="component" value="Chromosome"/>
</dbReference>
<dbReference type="GO" id="GO:0005737">
    <property type="term" value="C:cytoplasm"/>
    <property type="evidence" value="ECO:0007669"/>
    <property type="project" value="UniProtKB-SubCell"/>
</dbReference>
<dbReference type="GO" id="GO:0008760">
    <property type="term" value="F:UDP-N-acetylglucosamine 1-carboxyvinyltransferase activity"/>
    <property type="evidence" value="ECO:0007669"/>
    <property type="project" value="UniProtKB-UniRule"/>
</dbReference>
<dbReference type="GO" id="GO:0051301">
    <property type="term" value="P:cell division"/>
    <property type="evidence" value="ECO:0007669"/>
    <property type="project" value="UniProtKB-KW"/>
</dbReference>
<dbReference type="GO" id="GO:0071555">
    <property type="term" value="P:cell wall organization"/>
    <property type="evidence" value="ECO:0007669"/>
    <property type="project" value="UniProtKB-KW"/>
</dbReference>
<dbReference type="GO" id="GO:0009252">
    <property type="term" value="P:peptidoglycan biosynthetic process"/>
    <property type="evidence" value="ECO:0007669"/>
    <property type="project" value="UniProtKB-UniRule"/>
</dbReference>
<dbReference type="GO" id="GO:0008360">
    <property type="term" value="P:regulation of cell shape"/>
    <property type="evidence" value="ECO:0007669"/>
    <property type="project" value="UniProtKB-KW"/>
</dbReference>
<dbReference type="GO" id="GO:0019277">
    <property type="term" value="P:UDP-N-acetylgalactosamine biosynthetic process"/>
    <property type="evidence" value="ECO:0007669"/>
    <property type="project" value="InterPro"/>
</dbReference>
<dbReference type="CDD" id="cd01555">
    <property type="entry name" value="UdpNAET"/>
    <property type="match status" value="1"/>
</dbReference>
<dbReference type="FunFam" id="3.65.10.10:FF:000002">
    <property type="entry name" value="UDP-N-acetylglucosamine 1-carboxyvinyltransferase"/>
    <property type="match status" value="1"/>
</dbReference>
<dbReference type="Gene3D" id="3.65.10.10">
    <property type="entry name" value="Enolpyruvate transferase domain"/>
    <property type="match status" value="2"/>
</dbReference>
<dbReference type="HAMAP" id="MF_00111">
    <property type="entry name" value="MurA"/>
    <property type="match status" value="1"/>
</dbReference>
<dbReference type="InterPro" id="IPR001986">
    <property type="entry name" value="Enolpyruvate_Tfrase_dom"/>
</dbReference>
<dbReference type="InterPro" id="IPR036968">
    <property type="entry name" value="Enolpyruvate_Tfrase_sf"/>
</dbReference>
<dbReference type="InterPro" id="IPR050068">
    <property type="entry name" value="MurA_subfamily"/>
</dbReference>
<dbReference type="InterPro" id="IPR013792">
    <property type="entry name" value="RNA3'P_cycl/enolpyr_Trfase_a/b"/>
</dbReference>
<dbReference type="InterPro" id="IPR005750">
    <property type="entry name" value="UDP_GlcNAc_COvinyl_MurA"/>
</dbReference>
<dbReference type="NCBIfam" id="TIGR01072">
    <property type="entry name" value="murA"/>
    <property type="match status" value="1"/>
</dbReference>
<dbReference type="NCBIfam" id="NF006873">
    <property type="entry name" value="PRK09369.1"/>
    <property type="match status" value="1"/>
</dbReference>
<dbReference type="PANTHER" id="PTHR43783">
    <property type="entry name" value="UDP-N-ACETYLGLUCOSAMINE 1-CARBOXYVINYLTRANSFERASE"/>
    <property type="match status" value="1"/>
</dbReference>
<dbReference type="PANTHER" id="PTHR43783:SF1">
    <property type="entry name" value="UDP-N-ACETYLGLUCOSAMINE 1-CARBOXYVINYLTRANSFERASE"/>
    <property type="match status" value="1"/>
</dbReference>
<dbReference type="Pfam" id="PF00275">
    <property type="entry name" value="EPSP_synthase"/>
    <property type="match status" value="1"/>
</dbReference>
<dbReference type="SUPFAM" id="SSF55205">
    <property type="entry name" value="EPT/RTPC-like"/>
    <property type="match status" value="1"/>
</dbReference>
<gene>
    <name evidence="1" type="primary">murA</name>
    <name type="ordered locus">Ssed_0739</name>
</gene>